<feature type="chain" id="PRO_0000334746" description="Leucine--tRNA ligase">
    <location>
        <begin position="1"/>
        <end position="976"/>
    </location>
</feature>
<feature type="short sequence motif" description="'HIGH' region">
    <location>
        <begin position="63"/>
        <end position="74"/>
    </location>
</feature>
<feature type="short sequence motif" description="'KMSKS' region">
    <location>
        <begin position="745"/>
        <end position="749"/>
    </location>
</feature>
<feature type="binding site" evidence="1">
    <location>
        <position position="748"/>
    </location>
    <ligand>
        <name>ATP</name>
        <dbReference type="ChEBI" id="CHEBI:30616"/>
    </ligand>
</feature>
<name>SYL_CORJK</name>
<gene>
    <name evidence="1" type="primary">leuS</name>
    <name type="ordered locus">jk2075</name>
</gene>
<protein>
    <recommendedName>
        <fullName evidence="1">Leucine--tRNA ligase</fullName>
        <ecNumber evidence="1">6.1.1.4</ecNumber>
    </recommendedName>
    <alternativeName>
        <fullName evidence="1">Leucyl-tRNA synthetase</fullName>
        <shortName evidence="1">LeuRS</shortName>
    </alternativeName>
</protein>
<sequence length="976" mass="108844">MTNGSTEDNSYRYTPGLAAKIEAKWQKHWADKGTFNAPNPTGDLAEPGAELPEDRKFIQDMFPYPSGVGLHVGHPLGYIGTDVFARFHRMKGANVLHTLGYDAFGLPAEQYAVQTGTHPRTTTMANIANMERQLGRLGLGHDKRRSFATTDTDYYRWTQWIFLQIYNSWFDPEAKNANGTLGKARPIKELEEKLAAERADWADLSAAEKQEILDSYRLVYRSNSTVNWCPGLGTVLANEEVTAEGRSERGNFPVFRKNLQQWMMRITAYSDRLIDDLEYLDWPEKVKSMQRNWIGRSRGAEVTFDCLGNDIDVFTTRPDTLFGATYMVLAPEHELVDTLVAQSGNSSSGSDAYTDVDPRWTYGQANPAAAVEAYRAAIAAKSDLERQENKEKTGVFLGVYATNPVNGAQVPVFIADYVLTGYGTGAIMAVPAHDSRDFEFATEFGLPIVPVLAPEGAEAGAGEQGGAELTEAFTEDGPHINSNNSDGLELNGLGKAEAIDKAIEWLESKGVGSGKIQYKLRDWLFARQRYWGEPFPIVYDEDGTAHGLPEDMLPVELPEVEDYKPVSFDPDDKDSAPQPPLAKAKDWVEVTLDLGDGEKTYYRDTNVMPQWAGSSWYQLRYIDPNNDNALVDIENERYWVGPREGRPSGGVDLYVGGVEHAVLHLLYARFWHKVLFDLGVVSSFEPYYRLYNQGYIQAYAYTDSRGVYVPAEEVTERDGKFFWVRKADDAEGVTKEEEVFQEYGKMGKSLKNAVSPDEICDDYGADTLRVYEMAMGPLDTSRPWATKDVVGAQRFLQRAWRLAVDENTGKGSVSDDALTDEDLKALHRTIAGVHENYAELRDNTAVAKLIEYVNYLTKTYSAGQAPRAAVEPLVQMLSPVAPHIAEEMWEILGHSEGITYESFPEWDEKWLVDDTIELPVQVMGKLRGRINVAADASREDIEAAALEEPNVASHIEGKTVAKIIVVPGKMVNIVAK</sequence>
<keyword id="KW-0030">Aminoacyl-tRNA synthetase</keyword>
<keyword id="KW-0067">ATP-binding</keyword>
<keyword id="KW-0963">Cytoplasm</keyword>
<keyword id="KW-0436">Ligase</keyword>
<keyword id="KW-0547">Nucleotide-binding</keyword>
<keyword id="KW-0648">Protein biosynthesis</keyword>
<keyword id="KW-1185">Reference proteome</keyword>
<reference key="1">
    <citation type="journal article" date="2005" name="J. Bacteriol.">
        <title>Complete genome sequence and analysis of the multiresistant nosocomial pathogen Corynebacterium jeikeium K411, a lipid-requiring bacterium of the human skin flora.</title>
        <authorList>
            <person name="Tauch A."/>
            <person name="Kaiser O."/>
            <person name="Hain T."/>
            <person name="Goesmann A."/>
            <person name="Weisshaar B."/>
            <person name="Albersmeier A."/>
            <person name="Bekel T."/>
            <person name="Bischoff N."/>
            <person name="Brune I."/>
            <person name="Chakraborty T."/>
            <person name="Kalinowski J."/>
            <person name="Meyer F."/>
            <person name="Rupp O."/>
            <person name="Schneiker S."/>
            <person name="Viehoever P."/>
            <person name="Puehler A."/>
        </authorList>
    </citation>
    <scope>NUCLEOTIDE SEQUENCE [LARGE SCALE GENOMIC DNA]</scope>
    <source>
        <strain>K411</strain>
    </source>
</reference>
<comment type="catalytic activity">
    <reaction evidence="1">
        <text>tRNA(Leu) + L-leucine + ATP = L-leucyl-tRNA(Leu) + AMP + diphosphate</text>
        <dbReference type="Rhea" id="RHEA:11688"/>
        <dbReference type="Rhea" id="RHEA-COMP:9613"/>
        <dbReference type="Rhea" id="RHEA-COMP:9622"/>
        <dbReference type="ChEBI" id="CHEBI:30616"/>
        <dbReference type="ChEBI" id="CHEBI:33019"/>
        <dbReference type="ChEBI" id="CHEBI:57427"/>
        <dbReference type="ChEBI" id="CHEBI:78442"/>
        <dbReference type="ChEBI" id="CHEBI:78494"/>
        <dbReference type="ChEBI" id="CHEBI:456215"/>
        <dbReference type="EC" id="6.1.1.4"/>
    </reaction>
</comment>
<comment type="subcellular location">
    <subcellularLocation>
        <location evidence="1">Cytoplasm</location>
    </subcellularLocation>
</comment>
<comment type="similarity">
    <text evidence="1">Belongs to the class-I aminoacyl-tRNA synthetase family.</text>
</comment>
<accession>Q4JSF0</accession>
<evidence type="ECO:0000255" key="1">
    <source>
        <dbReference type="HAMAP-Rule" id="MF_00049"/>
    </source>
</evidence>
<proteinExistence type="inferred from homology"/>
<organism>
    <name type="scientific">Corynebacterium jeikeium (strain K411)</name>
    <dbReference type="NCBI Taxonomy" id="306537"/>
    <lineage>
        <taxon>Bacteria</taxon>
        <taxon>Bacillati</taxon>
        <taxon>Actinomycetota</taxon>
        <taxon>Actinomycetes</taxon>
        <taxon>Mycobacteriales</taxon>
        <taxon>Corynebacteriaceae</taxon>
        <taxon>Corynebacterium</taxon>
    </lineage>
</organism>
<dbReference type="EC" id="6.1.1.4" evidence="1"/>
<dbReference type="EMBL" id="CR931997">
    <property type="protein sequence ID" value="CAI38257.1"/>
    <property type="molecule type" value="Genomic_DNA"/>
</dbReference>
<dbReference type="RefSeq" id="WP_005292496.1">
    <property type="nucleotide sequence ID" value="NC_007164.1"/>
</dbReference>
<dbReference type="SMR" id="Q4JSF0"/>
<dbReference type="STRING" id="306537.jk2075"/>
<dbReference type="GeneID" id="92739707"/>
<dbReference type="KEGG" id="cjk:jk2075"/>
<dbReference type="eggNOG" id="COG0495">
    <property type="taxonomic scope" value="Bacteria"/>
</dbReference>
<dbReference type="HOGENOM" id="CLU_004427_0_0_11"/>
<dbReference type="OrthoDB" id="9810365at2"/>
<dbReference type="Proteomes" id="UP000000545">
    <property type="component" value="Chromosome"/>
</dbReference>
<dbReference type="GO" id="GO:0005829">
    <property type="term" value="C:cytosol"/>
    <property type="evidence" value="ECO:0007669"/>
    <property type="project" value="TreeGrafter"/>
</dbReference>
<dbReference type="GO" id="GO:0002161">
    <property type="term" value="F:aminoacyl-tRNA deacylase activity"/>
    <property type="evidence" value="ECO:0007669"/>
    <property type="project" value="InterPro"/>
</dbReference>
<dbReference type="GO" id="GO:0005524">
    <property type="term" value="F:ATP binding"/>
    <property type="evidence" value="ECO:0007669"/>
    <property type="project" value="UniProtKB-UniRule"/>
</dbReference>
<dbReference type="GO" id="GO:0004823">
    <property type="term" value="F:leucine-tRNA ligase activity"/>
    <property type="evidence" value="ECO:0007669"/>
    <property type="project" value="UniProtKB-UniRule"/>
</dbReference>
<dbReference type="GO" id="GO:0006429">
    <property type="term" value="P:leucyl-tRNA aminoacylation"/>
    <property type="evidence" value="ECO:0007669"/>
    <property type="project" value="UniProtKB-UniRule"/>
</dbReference>
<dbReference type="CDD" id="cd07958">
    <property type="entry name" value="Anticodon_Ia_Leu_BEm"/>
    <property type="match status" value="1"/>
</dbReference>
<dbReference type="FunFam" id="3.40.50.620:FF:000056">
    <property type="entry name" value="Leucine--tRNA ligase"/>
    <property type="match status" value="1"/>
</dbReference>
<dbReference type="FunFam" id="3.40.50.620:FF:000060">
    <property type="entry name" value="Leucine--tRNA ligase"/>
    <property type="match status" value="1"/>
</dbReference>
<dbReference type="FunFam" id="3.40.50.620:FF:000087">
    <property type="entry name" value="Leucine--tRNA ligase"/>
    <property type="match status" value="1"/>
</dbReference>
<dbReference type="FunFam" id="3.90.740.10:FF:000017">
    <property type="entry name" value="Leucine--tRNA ligase"/>
    <property type="match status" value="1"/>
</dbReference>
<dbReference type="FunFam" id="1.10.730.10:FF:000011">
    <property type="entry name" value="Leucine--tRNA ligase chloroplastic/mitochondrial"/>
    <property type="match status" value="1"/>
</dbReference>
<dbReference type="Gene3D" id="3.40.50.620">
    <property type="entry name" value="HUPs"/>
    <property type="match status" value="3"/>
</dbReference>
<dbReference type="Gene3D" id="1.10.730.10">
    <property type="entry name" value="Isoleucyl-tRNA Synthetase, Domain 1"/>
    <property type="match status" value="2"/>
</dbReference>
<dbReference type="Gene3D" id="3.90.740.10">
    <property type="entry name" value="Valyl/Leucyl/Isoleucyl-tRNA synthetase, editing domain"/>
    <property type="match status" value="1"/>
</dbReference>
<dbReference type="HAMAP" id="MF_00049_B">
    <property type="entry name" value="Leu_tRNA_synth_B"/>
    <property type="match status" value="1"/>
</dbReference>
<dbReference type="InterPro" id="IPR002302">
    <property type="entry name" value="Leu-tRNA-ligase"/>
</dbReference>
<dbReference type="InterPro" id="IPR025709">
    <property type="entry name" value="Leu_tRNA-synth_edit"/>
</dbReference>
<dbReference type="InterPro" id="IPR013155">
    <property type="entry name" value="M/V/L/I-tRNA-synth_anticd-bd"/>
</dbReference>
<dbReference type="InterPro" id="IPR015413">
    <property type="entry name" value="Methionyl/Leucyl_tRNA_Synth"/>
</dbReference>
<dbReference type="InterPro" id="IPR014729">
    <property type="entry name" value="Rossmann-like_a/b/a_fold"/>
</dbReference>
<dbReference type="InterPro" id="IPR009080">
    <property type="entry name" value="tRNAsynth_Ia_anticodon-bd"/>
</dbReference>
<dbReference type="InterPro" id="IPR009008">
    <property type="entry name" value="Val/Leu/Ile-tRNA-synth_edit"/>
</dbReference>
<dbReference type="PANTHER" id="PTHR43740:SF2">
    <property type="entry name" value="LEUCINE--TRNA LIGASE, MITOCHONDRIAL"/>
    <property type="match status" value="1"/>
</dbReference>
<dbReference type="PANTHER" id="PTHR43740">
    <property type="entry name" value="LEUCYL-TRNA SYNTHETASE"/>
    <property type="match status" value="1"/>
</dbReference>
<dbReference type="Pfam" id="PF08264">
    <property type="entry name" value="Anticodon_1"/>
    <property type="match status" value="1"/>
</dbReference>
<dbReference type="Pfam" id="PF13603">
    <property type="entry name" value="tRNA-synt_1_2"/>
    <property type="match status" value="2"/>
</dbReference>
<dbReference type="Pfam" id="PF09334">
    <property type="entry name" value="tRNA-synt_1g"/>
    <property type="match status" value="1"/>
</dbReference>
<dbReference type="PRINTS" id="PR00985">
    <property type="entry name" value="TRNASYNTHLEU"/>
</dbReference>
<dbReference type="SUPFAM" id="SSF47323">
    <property type="entry name" value="Anticodon-binding domain of a subclass of class I aminoacyl-tRNA synthetases"/>
    <property type="match status" value="1"/>
</dbReference>
<dbReference type="SUPFAM" id="SSF52374">
    <property type="entry name" value="Nucleotidylyl transferase"/>
    <property type="match status" value="1"/>
</dbReference>
<dbReference type="SUPFAM" id="SSF50677">
    <property type="entry name" value="ValRS/IleRS/LeuRS editing domain"/>
    <property type="match status" value="1"/>
</dbReference>